<comment type="function">
    <text evidence="1">Channel that opens in response to stretch forces in the membrane lipid bilayer. May participate in the regulation of osmotic pressure changes within the cell.</text>
</comment>
<comment type="subunit">
    <text evidence="1">Homopentamer.</text>
</comment>
<comment type="subcellular location">
    <subcellularLocation>
        <location evidence="1">Cell inner membrane</location>
        <topology evidence="1">Multi-pass membrane protein</topology>
    </subcellularLocation>
</comment>
<comment type="similarity">
    <text evidence="1">Belongs to the MscL family.</text>
</comment>
<comment type="sequence caution" evidence="2">
    <conflict type="erroneous initiation">
        <sequence resource="EMBL-CDS" id="ABA76624"/>
    </conflict>
</comment>
<evidence type="ECO:0000255" key="1">
    <source>
        <dbReference type="HAMAP-Rule" id="MF_00115"/>
    </source>
</evidence>
<evidence type="ECO:0000305" key="2"/>
<sequence>MGVLSEFKAFAVKGNVVDMAVGIIIGAAFGKIVSSFVGDVIMPPIGLLIGGVDFSDLAITLKAAEGSAPAVVLAYGKFIQSVLDFVIVAFAIFMGVKAINRLKREEAVAPTLPPVPTKEEELLGEIRDLLKAQNNRP</sequence>
<gene>
    <name evidence="1" type="primary">mscL</name>
    <name type="ordered locus">Pfl01_4887</name>
</gene>
<proteinExistence type="inferred from homology"/>
<reference key="1">
    <citation type="journal article" date="2009" name="Genome Biol.">
        <title>Genomic and genetic analyses of diversity and plant interactions of Pseudomonas fluorescens.</title>
        <authorList>
            <person name="Silby M.W."/>
            <person name="Cerdeno-Tarraga A.M."/>
            <person name="Vernikos G.S."/>
            <person name="Giddens S.R."/>
            <person name="Jackson R.W."/>
            <person name="Preston G.M."/>
            <person name="Zhang X.-X."/>
            <person name="Moon C.D."/>
            <person name="Gehrig S.M."/>
            <person name="Godfrey S.A.C."/>
            <person name="Knight C.G."/>
            <person name="Malone J.G."/>
            <person name="Robinson Z."/>
            <person name="Spiers A.J."/>
            <person name="Harris S."/>
            <person name="Challis G.L."/>
            <person name="Yaxley A.M."/>
            <person name="Harris D."/>
            <person name="Seeger K."/>
            <person name="Murphy L."/>
            <person name="Rutter S."/>
            <person name="Squares R."/>
            <person name="Quail M.A."/>
            <person name="Saunders E."/>
            <person name="Mavromatis K."/>
            <person name="Brettin T.S."/>
            <person name="Bentley S.D."/>
            <person name="Hothersall J."/>
            <person name="Stephens E."/>
            <person name="Thomas C.M."/>
            <person name="Parkhill J."/>
            <person name="Levy S.B."/>
            <person name="Rainey P.B."/>
            <person name="Thomson N.R."/>
        </authorList>
    </citation>
    <scope>NUCLEOTIDE SEQUENCE [LARGE SCALE GENOMIC DNA]</scope>
    <source>
        <strain>Pf0-1</strain>
    </source>
</reference>
<keyword id="KW-0997">Cell inner membrane</keyword>
<keyword id="KW-1003">Cell membrane</keyword>
<keyword id="KW-0407">Ion channel</keyword>
<keyword id="KW-0406">Ion transport</keyword>
<keyword id="KW-0472">Membrane</keyword>
<keyword id="KW-0812">Transmembrane</keyword>
<keyword id="KW-1133">Transmembrane helix</keyword>
<keyword id="KW-0813">Transport</keyword>
<protein>
    <recommendedName>
        <fullName evidence="1">Large-conductance mechanosensitive channel</fullName>
    </recommendedName>
</protein>
<dbReference type="EMBL" id="CP000094">
    <property type="protein sequence ID" value="ABA76624.1"/>
    <property type="status" value="ALT_INIT"/>
    <property type="molecule type" value="Genomic_DNA"/>
</dbReference>
<dbReference type="RefSeq" id="WP_041475433.1">
    <property type="nucleotide sequence ID" value="NC_007492.2"/>
</dbReference>
<dbReference type="SMR" id="Q3K6I0"/>
<dbReference type="KEGG" id="pfo:Pfl01_4887"/>
<dbReference type="eggNOG" id="COG1970">
    <property type="taxonomic scope" value="Bacteria"/>
</dbReference>
<dbReference type="HOGENOM" id="CLU_095787_0_0_6"/>
<dbReference type="Proteomes" id="UP000002704">
    <property type="component" value="Chromosome"/>
</dbReference>
<dbReference type="GO" id="GO:0005886">
    <property type="term" value="C:plasma membrane"/>
    <property type="evidence" value="ECO:0007669"/>
    <property type="project" value="UniProtKB-SubCell"/>
</dbReference>
<dbReference type="GO" id="GO:0008381">
    <property type="term" value="F:mechanosensitive monoatomic ion channel activity"/>
    <property type="evidence" value="ECO:0007669"/>
    <property type="project" value="UniProtKB-UniRule"/>
</dbReference>
<dbReference type="FunFam" id="1.10.1200.120:FF:000001">
    <property type="entry name" value="Large-conductance mechanosensitive channel"/>
    <property type="match status" value="1"/>
</dbReference>
<dbReference type="Gene3D" id="1.10.1200.120">
    <property type="entry name" value="Large-conductance mechanosensitive channel, MscL, domain 1"/>
    <property type="match status" value="1"/>
</dbReference>
<dbReference type="HAMAP" id="MF_00115">
    <property type="entry name" value="MscL"/>
    <property type="match status" value="1"/>
</dbReference>
<dbReference type="InterPro" id="IPR019823">
    <property type="entry name" value="Mechanosensitive_channel_CS"/>
</dbReference>
<dbReference type="InterPro" id="IPR001185">
    <property type="entry name" value="MS_channel"/>
</dbReference>
<dbReference type="InterPro" id="IPR037673">
    <property type="entry name" value="MSC/AndL"/>
</dbReference>
<dbReference type="InterPro" id="IPR036019">
    <property type="entry name" value="MscL_channel"/>
</dbReference>
<dbReference type="NCBIfam" id="TIGR00220">
    <property type="entry name" value="mscL"/>
    <property type="match status" value="1"/>
</dbReference>
<dbReference type="NCBIfam" id="NF001843">
    <property type="entry name" value="PRK00567.1-4"/>
    <property type="match status" value="1"/>
</dbReference>
<dbReference type="PANTHER" id="PTHR30266:SF2">
    <property type="entry name" value="LARGE-CONDUCTANCE MECHANOSENSITIVE CHANNEL"/>
    <property type="match status" value="1"/>
</dbReference>
<dbReference type="PANTHER" id="PTHR30266">
    <property type="entry name" value="MECHANOSENSITIVE CHANNEL MSCL"/>
    <property type="match status" value="1"/>
</dbReference>
<dbReference type="Pfam" id="PF01741">
    <property type="entry name" value="MscL"/>
    <property type="match status" value="1"/>
</dbReference>
<dbReference type="PRINTS" id="PR01264">
    <property type="entry name" value="MECHCHANNEL"/>
</dbReference>
<dbReference type="SUPFAM" id="SSF81330">
    <property type="entry name" value="Gated mechanosensitive channel"/>
    <property type="match status" value="1"/>
</dbReference>
<dbReference type="PROSITE" id="PS01327">
    <property type="entry name" value="MSCL"/>
    <property type="match status" value="1"/>
</dbReference>
<organism>
    <name type="scientific">Pseudomonas fluorescens (strain Pf0-1)</name>
    <dbReference type="NCBI Taxonomy" id="205922"/>
    <lineage>
        <taxon>Bacteria</taxon>
        <taxon>Pseudomonadati</taxon>
        <taxon>Pseudomonadota</taxon>
        <taxon>Gammaproteobacteria</taxon>
        <taxon>Pseudomonadales</taxon>
        <taxon>Pseudomonadaceae</taxon>
        <taxon>Pseudomonas</taxon>
    </lineage>
</organism>
<feature type="chain" id="PRO_0000238019" description="Large-conductance mechanosensitive channel">
    <location>
        <begin position="1"/>
        <end position="137"/>
    </location>
</feature>
<feature type="transmembrane region" description="Helical" evidence="1">
    <location>
        <begin position="9"/>
        <end position="29"/>
    </location>
</feature>
<feature type="transmembrane region" description="Helical" evidence="1">
    <location>
        <begin position="79"/>
        <end position="99"/>
    </location>
</feature>
<name>MSCL_PSEPF</name>
<accession>Q3K6I0</accession>